<gene>
    <name evidence="5" type="primary">fdhB1</name>
    <name evidence="8" type="ordered locus">MMP1297</name>
</gene>
<protein>
    <recommendedName>
        <fullName evidence="6">F420-dependent formate dehydrogenase 1 subunit beta</fullName>
        <shortName evidence="6">Fdh1 subunit beta</shortName>
        <ecNumber evidence="7">1.17.98.3</ecNumber>
    </recommendedName>
</protein>
<comment type="function">
    <text evidence="4">Catalyzes the oxidation of formate to carbon dioxide, with coenzyme F420 as the electron acceptor (PubMed:18791018). In vitro can also use methyl viologen as electron acceptor (PubMed:18791018).</text>
</comment>
<comment type="catalytic activity">
    <reaction evidence="7">
        <text>oxidized coenzyme F420-(gamma-L-Glu)(n) + formate + 2 H(+) = reduced coenzyme F420-(gamma-L-Glu)(n) + CO2</text>
        <dbReference type="Rhea" id="RHEA:42764"/>
        <dbReference type="Rhea" id="RHEA-COMP:12939"/>
        <dbReference type="Rhea" id="RHEA-COMP:14378"/>
        <dbReference type="ChEBI" id="CHEBI:15378"/>
        <dbReference type="ChEBI" id="CHEBI:15740"/>
        <dbReference type="ChEBI" id="CHEBI:16526"/>
        <dbReference type="ChEBI" id="CHEBI:133980"/>
        <dbReference type="ChEBI" id="CHEBI:139511"/>
        <dbReference type="EC" id="1.17.98.3"/>
    </reaction>
</comment>
<comment type="cofactor">
    <cofactor evidence="2">
        <name>[4Fe-4S] cluster</name>
        <dbReference type="ChEBI" id="CHEBI:49883"/>
    </cofactor>
    <text evidence="2">Binds 2 [4Fe-4S] clusters.</text>
</comment>
<comment type="cofactor">
    <cofactor evidence="1">
        <name>FAD</name>
        <dbReference type="ChEBI" id="CHEBI:57692"/>
    </cofactor>
</comment>
<comment type="cofactor">
    <cofactor evidence="1">
        <name>Zn(2+)</name>
        <dbReference type="ChEBI" id="CHEBI:29105"/>
    </cofactor>
</comment>
<comment type="subunit">
    <text evidence="1">Dimer of an alpha (FdhA1) and a beta (FdhB1) subunit.</text>
</comment>
<comment type="miscellaneous">
    <text evidence="4">The genome of M.maripaludis harbors two sets of genes encoding the F420-dependent formate dehydrogenase (Fdh), fdhA1-fdhB1 (Fdh1 isozyme) and fdhA2-fdhB2 (Fdh2 isozyme) (PubMed:18791018). The Fdh1 isozyme is the primary Fdh and the Fdh2 isozyme may not play a major role (PubMed:18791018).</text>
</comment>
<comment type="similarity">
    <text evidence="6">Belongs to the FrhB family.</text>
</comment>
<evidence type="ECO:0000250" key="1">
    <source>
        <dbReference type="UniProtKB" id="P06130"/>
    </source>
</evidence>
<evidence type="ECO:0000255" key="2">
    <source>
        <dbReference type="PROSITE-ProRule" id="PRU00711"/>
    </source>
</evidence>
<evidence type="ECO:0000256" key="3">
    <source>
        <dbReference type="SAM" id="MobiDB-lite"/>
    </source>
</evidence>
<evidence type="ECO:0000269" key="4">
    <source>
    </source>
</evidence>
<evidence type="ECO:0000303" key="5">
    <source>
    </source>
</evidence>
<evidence type="ECO:0000305" key="6"/>
<evidence type="ECO:0000305" key="7">
    <source>
    </source>
</evidence>
<evidence type="ECO:0000312" key="8">
    <source>
        <dbReference type="EMBL" id="CAF30853.1"/>
    </source>
</evidence>
<organism>
    <name type="scientific">Methanococcus maripaludis (strain DSM 14266 / JCM 13030 / NBRC 101832 / S2 / LL)</name>
    <dbReference type="NCBI Taxonomy" id="267377"/>
    <lineage>
        <taxon>Archaea</taxon>
        <taxon>Methanobacteriati</taxon>
        <taxon>Methanobacteriota</taxon>
        <taxon>Methanomada group</taxon>
        <taxon>Methanococci</taxon>
        <taxon>Methanococcales</taxon>
        <taxon>Methanococcaceae</taxon>
        <taxon>Methanococcus</taxon>
    </lineage>
</organism>
<proteinExistence type="evidence at protein level"/>
<keyword id="KW-0004">4Fe-4S</keyword>
<keyword id="KW-0249">Electron transport</keyword>
<keyword id="KW-0274">FAD</keyword>
<keyword id="KW-0285">Flavoprotein</keyword>
<keyword id="KW-0408">Iron</keyword>
<keyword id="KW-0411">Iron-sulfur</keyword>
<keyword id="KW-0479">Metal-binding</keyword>
<keyword id="KW-0560">Oxidoreductase</keyword>
<keyword id="KW-1185">Reference proteome</keyword>
<keyword id="KW-0677">Repeat</keyword>
<keyword id="KW-0813">Transport</keyword>
<keyword id="KW-0862">Zinc</keyword>
<dbReference type="EC" id="1.17.98.3" evidence="7"/>
<dbReference type="EMBL" id="BX950229">
    <property type="protein sequence ID" value="CAF30853.1"/>
    <property type="molecule type" value="Genomic_DNA"/>
</dbReference>
<dbReference type="RefSeq" id="WP_011171241.1">
    <property type="nucleotide sequence ID" value="NC_005791.1"/>
</dbReference>
<dbReference type="SMR" id="Q6LXQ2"/>
<dbReference type="STRING" id="267377.MMP1297"/>
<dbReference type="EnsemblBacteria" id="CAF30853">
    <property type="protein sequence ID" value="CAF30853"/>
    <property type="gene ID" value="MMP1297"/>
</dbReference>
<dbReference type="GeneID" id="2761363"/>
<dbReference type="KEGG" id="mmp:MMP1297"/>
<dbReference type="PATRIC" id="fig|267377.15.peg.1330"/>
<dbReference type="eggNOG" id="arCOG02653">
    <property type="taxonomic scope" value="Archaea"/>
</dbReference>
<dbReference type="HOGENOM" id="CLU_063409_0_0_2"/>
<dbReference type="OrthoDB" id="35334at2157"/>
<dbReference type="BioCyc" id="MetaCyc:MONOMER-20164"/>
<dbReference type="Proteomes" id="UP000000590">
    <property type="component" value="Chromosome"/>
</dbReference>
<dbReference type="GO" id="GO:0051539">
    <property type="term" value="F:4 iron, 4 sulfur cluster binding"/>
    <property type="evidence" value="ECO:0007669"/>
    <property type="project" value="UniProtKB-KW"/>
</dbReference>
<dbReference type="GO" id="GO:0043794">
    <property type="term" value="F:formate dehydrogenase (coenzyme F420) activity"/>
    <property type="evidence" value="ECO:0007669"/>
    <property type="project" value="RHEA"/>
</dbReference>
<dbReference type="GO" id="GO:0046872">
    <property type="term" value="F:metal ion binding"/>
    <property type="evidence" value="ECO:0007669"/>
    <property type="project" value="UniProtKB-KW"/>
</dbReference>
<dbReference type="GO" id="GO:0052592">
    <property type="term" value="F:oxidoreductase activity, acting on CH or CH2 groups, with an iron-sulfur protein as acceptor"/>
    <property type="evidence" value="ECO:0007669"/>
    <property type="project" value="TreeGrafter"/>
</dbReference>
<dbReference type="Gene3D" id="1.10.1060.10">
    <property type="entry name" value="Alpha-helical ferredoxin"/>
    <property type="match status" value="1"/>
</dbReference>
<dbReference type="InterPro" id="IPR017896">
    <property type="entry name" value="4Fe4S_Fe-S-bd"/>
</dbReference>
<dbReference type="InterPro" id="IPR017900">
    <property type="entry name" value="4Fe4S_Fe_S_CS"/>
</dbReference>
<dbReference type="InterPro" id="IPR007516">
    <property type="entry name" value="Co_F420_Hydgase/DH_bsu_N"/>
</dbReference>
<dbReference type="InterPro" id="IPR045220">
    <property type="entry name" value="FRHB/FDHB/HCAR-like"/>
</dbReference>
<dbReference type="InterPro" id="IPR007525">
    <property type="entry name" value="FrhB_FdhB_C"/>
</dbReference>
<dbReference type="InterPro" id="IPR009051">
    <property type="entry name" value="Helical_ferredxn"/>
</dbReference>
<dbReference type="PANTHER" id="PTHR31332">
    <property type="entry name" value="7-HYDROXYMETHYL CHLOROPHYLL A REDUCTASE, CHLOROPLASTIC"/>
    <property type="match status" value="1"/>
</dbReference>
<dbReference type="PANTHER" id="PTHR31332:SF6">
    <property type="entry name" value="FORMATE DEHYDROGENASE SUBUNIT BETA"/>
    <property type="match status" value="1"/>
</dbReference>
<dbReference type="Pfam" id="PF13183">
    <property type="entry name" value="Fer4_8"/>
    <property type="match status" value="1"/>
</dbReference>
<dbReference type="Pfam" id="PF04432">
    <property type="entry name" value="FrhB_FdhB_C"/>
    <property type="match status" value="1"/>
</dbReference>
<dbReference type="Pfam" id="PF04422">
    <property type="entry name" value="FrhB_FdhB_N"/>
    <property type="match status" value="1"/>
</dbReference>
<dbReference type="SUPFAM" id="SSF46548">
    <property type="entry name" value="alpha-helical ferredoxin"/>
    <property type="match status" value="1"/>
</dbReference>
<dbReference type="PROSITE" id="PS00198">
    <property type="entry name" value="4FE4S_FER_1"/>
    <property type="match status" value="2"/>
</dbReference>
<dbReference type="PROSITE" id="PS51379">
    <property type="entry name" value="4FE4S_FER_2"/>
    <property type="match status" value="1"/>
</dbReference>
<sequence length="387" mass="43092">MSNEMYYVQASDPAILEKGECGGAVTALFKYLLDKGIVDGVLALKKGVDVYDAIPTFVTSSEDLLSTAGSLHCAPTMWGGIIKEYLQDAKIAVPVKPCDMRAIVELAKRAQINLDNVYMIGLNCGGTVPPKTAMEMIKLFYEVDPKDVVKEEIDKGKFIIVMKDGSHKEVKMHDLEDNGYGRRVNCQRCDEKIPRKADIAAGNWGVIGEDAGKYTFMEVCTEKGKQLLKDAEKDGYVKTKAPNPKGLEIRAKVESSMLKMGEDYKNKWLEEKYPTIEEWNRQWNKCIKCYGCRDVCPVCFCRECALTADYVDTGSIPPDPIMFQGVRMSHMAFSCVNCGQCEDVCPMEIPVARIFHKIQEKTRKELGYRPGVDDEAPPALGGSCPTQ</sequence>
<feature type="chain" id="PRO_0000461129" description="F420-dependent formate dehydrogenase 1 subunit beta">
    <location>
        <begin position="1"/>
        <end position="387"/>
    </location>
</feature>
<feature type="domain" description="4Fe-4S ferredoxin-type 1" evidence="2">
    <location>
        <begin position="275"/>
        <end position="298"/>
    </location>
</feature>
<feature type="domain" description="4Fe-4S ferredoxin-type 2" evidence="2">
    <location>
        <begin position="326"/>
        <end position="355"/>
    </location>
</feature>
<feature type="region of interest" description="Disordered" evidence="3">
    <location>
        <begin position="366"/>
        <end position="387"/>
    </location>
</feature>
<feature type="binding site" evidence="2">
    <location>
        <position position="286"/>
    </location>
    <ligand>
        <name>[4Fe-4S] cluster</name>
        <dbReference type="ChEBI" id="CHEBI:49883"/>
        <label>1</label>
    </ligand>
</feature>
<feature type="binding site" evidence="2">
    <location>
        <position position="289"/>
    </location>
    <ligand>
        <name>[4Fe-4S] cluster</name>
        <dbReference type="ChEBI" id="CHEBI:49883"/>
        <label>1</label>
    </ligand>
</feature>
<feature type="binding site" evidence="2">
    <location>
        <position position="292"/>
    </location>
    <ligand>
        <name>[4Fe-4S] cluster</name>
        <dbReference type="ChEBI" id="CHEBI:49883"/>
        <label>1</label>
    </ligand>
</feature>
<feature type="binding site" evidence="2">
    <location>
        <position position="296"/>
    </location>
    <ligand>
        <name>[4Fe-4S] cluster</name>
        <dbReference type="ChEBI" id="CHEBI:49883"/>
        <label>2</label>
    </ligand>
</feature>
<feature type="binding site" evidence="2">
    <location>
        <position position="335"/>
    </location>
    <ligand>
        <name>[4Fe-4S] cluster</name>
        <dbReference type="ChEBI" id="CHEBI:49883"/>
        <label>2</label>
    </ligand>
</feature>
<feature type="binding site" evidence="2">
    <location>
        <position position="338"/>
    </location>
    <ligand>
        <name>[4Fe-4S] cluster</name>
        <dbReference type="ChEBI" id="CHEBI:49883"/>
        <label>2</label>
    </ligand>
</feature>
<feature type="binding site" evidence="2">
    <location>
        <position position="341"/>
    </location>
    <ligand>
        <name>[4Fe-4S] cluster</name>
        <dbReference type="ChEBI" id="CHEBI:49883"/>
        <label>2</label>
    </ligand>
</feature>
<feature type="binding site" evidence="2">
    <location>
        <position position="345"/>
    </location>
    <ligand>
        <name>[4Fe-4S] cluster</name>
        <dbReference type="ChEBI" id="CHEBI:49883"/>
        <label>1</label>
    </ligand>
</feature>
<accession>Q6LXQ2</accession>
<reference key="1">
    <citation type="journal article" date="2004" name="J. Bacteriol.">
        <title>Complete genome sequence of the genetically tractable hydrogenotrophic methanogen Methanococcus maripaludis.</title>
        <authorList>
            <person name="Hendrickson E.L."/>
            <person name="Kaul R."/>
            <person name="Zhou Y."/>
            <person name="Bovee D."/>
            <person name="Chapman P."/>
            <person name="Chung J."/>
            <person name="Conway de Macario E."/>
            <person name="Dodsworth J.A."/>
            <person name="Gillett W."/>
            <person name="Graham D.E."/>
            <person name="Hackett M."/>
            <person name="Haydock A.K."/>
            <person name="Kang A."/>
            <person name="Land M.L."/>
            <person name="Levy R."/>
            <person name="Lie T.J."/>
            <person name="Major T.A."/>
            <person name="Moore B.C."/>
            <person name="Porat I."/>
            <person name="Palmeiri A."/>
            <person name="Rouse G."/>
            <person name="Saenphimmachak C."/>
            <person name="Soell D."/>
            <person name="Van Dien S."/>
            <person name="Wang T."/>
            <person name="Whitman W.B."/>
            <person name="Xia Q."/>
            <person name="Zhang Y."/>
            <person name="Larimer F.W."/>
            <person name="Olson M.V."/>
            <person name="Leigh J.A."/>
        </authorList>
    </citation>
    <scope>NUCLEOTIDE SEQUENCE [LARGE SCALE GENOMIC DNA]</scope>
    <source>
        <strain>DSM 14266 / JCM 13030 / NBRC 101832 / S2 / LL</strain>
    </source>
</reference>
<reference key="2">
    <citation type="journal article" date="2008" name="Appl. Environ. Microbiol.">
        <title>Formate-dependent H2 production by the mesophilic methanogen Methanococcus maripaludis.</title>
        <authorList>
            <person name="Lupa B."/>
            <person name="Hendrickson E.L."/>
            <person name="Leigh J.A."/>
            <person name="Whitman W.B."/>
        </authorList>
    </citation>
    <scope>FUNCTION AS A FORMATE DEHYDROGENASE</scope>
    <source>
        <strain>DSM 14266 / JCM 13030 / NBRC 101832 / S2 / LL</strain>
    </source>
</reference>
<name>FDHB1_METMP</name>